<comment type="function">
    <text evidence="1">Catalyzes the interconversion of 2-phosphoglycerate and 3-phosphoglycerate.</text>
</comment>
<comment type="catalytic activity">
    <reaction evidence="1">
        <text>(2R)-2-phosphoglycerate = (2R)-3-phosphoglycerate</text>
        <dbReference type="Rhea" id="RHEA:15901"/>
        <dbReference type="ChEBI" id="CHEBI:58272"/>
        <dbReference type="ChEBI" id="CHEBI:58289"/>
        <dbReference type="EC" id="5.4.2.11"/>
    </reaction>
</comment>
<comment type="pathway">
    <text evidence="1">Carbohydrate degradation; glycolysis; pyruvate from D-glyceraldehyde 3-phosphate: step 3/5.</text>
</comment>
<comment type="similarity">
    <text evidence="1">Belongs to the phosphoglycerate mutase family. BPG-dependent PGAM subfamily.</text>
</comment>
<evidence type="ECO:0000255" key="1">
    <source>
        <dbReference type="HAMAP-Rule" id="MF_01039"/>
    </source>
</evidence>
<dbReference type="EC" id="5.4.2.11" evidence="1"/>
<dbReference type="EMBL" id="BA000035">
    <property type="protein sequence ID" value="BAC17233.1"/>
    <property type="molecule type" value="Genomic_DNA"/>
</dbReference>
<dbReference type="SMR" id="Q8FSH0"/>
<dbReference type="STRING" id="196164.gene:10740821"/>
<dbReference type="KEGG" id="cef:CE0423"/>
<dbReference type="eggNOG" id="COG0588">
    <property type="taxonomic scope" value="Bacteria"/>
</dbReference>
<dbReference type="HOGENOM" id="CLU_033323_1_1_11"/>
<dbReference type="UniPathway" id="UPA00109">
    <property type="reaction ID" value="UER00186"/>
</dbReference>
<dbReference type="Proteomes" id="UP000001409">
    <property type="component" value="Chromosome"/>
</dbReference>
<dbReference type="GO" id="GO:0004619">
    <property type="term" value="F:phosphoglycerate mutase activity"/>
    <property type="evidence" value="ECO:0007669"/>
    <property type="project" value="UniProtKB-EC"/>
</dbReference>
<dbReference type="GO" id="GO:0006094">
    <property type="term" value="P:gluconeogenesis"/>
    <property type="evidence" value="ECO:0007669"/>
    <property type="project" value="UniProtKB-UniRule"/>
</dbReference>
<dbReference type="GO" id="GO:0006096">
    <property type="term" value="P:glycolytic process"/>
    <property type="evidence" value="ECO:0007669"/>
    <property type="project" value="UniProtKB-UniRule"/>
</dbReference>
<dbReference type="CDD" id="cd07067">
    <property type="entry name" value="HP_PGM_like"/>
    <property type="match status" value="1"/>
</dbReference>
<dbReference type="FunFam" id="3.40.50.1240:FF:000003">
    <property type="entry name" value="2,3-bisphosphoglycerate-dependent phosphoglycerate mutase"/>
    <property type="match status" value="1"/>
</dbReference>
<dbReference type="Gene3D" id="3.40.50.1240">
    <property type="entry name" value="Phosphoglycerate mutase-like"/>
    <property type="match status" value="1"/>
</dbReference>
<dbReference type="HAMAP" id="MF_01039">
    <property type="entry name" value="PGAM_GpmA"/>
    <property type="match status" value="1"/>
</dbReference>
<dbReference type="InterPro" id="IPR013078">
    <property type="entry name" value="His_Pase_superF_clade-1"/>
</dbReference>
<dbReference type="InterPro" id="IPR029033">
    <property type="entry name" value="His_PPase_superfam"/>
</dbReference>
<dbReference type="InterPro" id="IPR001345">
    <property type="entry name" value="PG/BPGM_mutase_AS"/>
</dbReference>
<dbReference type="InterPro" id="IPR005952">
    <property type="entry name" value="Phosphogly_mut1"/>
</dbReference>
<dbReference type="NCBIfam" id="TIGR01258">
    <property type="entry name" value="pgm_1"/>
    <property type="match status" value="1"/>
</dbReference>
<dbReference type="NCBIfam" id="NF010713">
    <property type="entry name" value="PRK14115.1"/>
    <property type="match status" value="1"/>
</dbReference>
<dbReference type="NCBIfam" id="NF010718">
    <property type="entry name" value="PRK14120.1"/>
    <property type="match status" value="1"/>
</dbReference>
<dbReference type="PANTHER" id="PTHR11931">
    <property type="entry name" value="PHOSPHOGLYCERATE MUTASE"/>
    <property type="match status" value="1"/>
</dbReference>
<dbReference type="Pfam" id="PF00300">
    <property type="entry name" value="His_Phos_1"/>
    <property type="match status" value="1"/>
</dbReference>
<dbReference type="PIRSF" id="PIRSF000709">
    <property type="entry name" value="6PFK_2-Ptase"/>
    <property type="match status" value="1"/>
</dbReference>
<dbReference type="SMART" id="SM00855">
    <property type="entry name" value="PGAM"/>
    <property type="match status" value="1"/>
</dbReference>
<dbReference type="SUPFAM" id="SSF53254">
    <property type="entry name" value="Phosphoglycerate mutase-like"/>
    <property type="match status" value="1"/>
</dbReference>
<dbReference type="PROSITE" id="PS00175">
    <property type="entry name" value="PG_MUTASE"/>
    <property type="match status" value="1"/>
</dbReference>
<gene>
    <name evidence="1" type="primary">gpmA</name>
    <name type="ordered locus">CE0423</name>
</gene>
<accession>Q8FSH0</accession>
<feature type="chain" id="PRO_0000179870" description="2,3-bisphosphoglycerate-dependent phosphoglycerate mutase">
    <location>
        <begin position="1"/>
        <end position="250"/>
    </location>
</feature>
<feature type="active site" description="Tele-phosphohistidine intermediate" evidence="1">
    <location>
        <position position="13"/>
    </location>
</feature>
<feature type="active site" description="Proton donor/acceptor" evidence="1">
    <location>
        <position position="91"/>
    </location>
</feature>
<feature type="binding site" evidence="1">
    <location>
        <begin position="12"/>
        <end position="19"/>
    </location>
    <ligand>
        <name>substrate</name>
    </ligand>
</feature>
<feature type="binding site" evidence="1">
    <location>
        <begin position="25"/>
        <end position="26"/>
    </location>
    <ligand>
        <name>substrate</name>
    </ligand>
</feature>
<feature type="binding site" evidence="1">
    <location>
        <position position="64"/>
    </location>
    <ligand>
        <name>substrate</name>
    </ligand>
</feature>
<feature type="binding site" evidence="1">
    <location>
        <begin position="91"/>
        <end position="94"/>
    </location>
    <ligand>
        <name>substrate</name>
    </ligand>
</feature>
<feature type="binding site" evidence="1">
    <location>
        <position position="102"/>
    </location>
    <ligand>
        <name>substrate</name>
    </ligand>
</feature>
<feature type="binding site" evidence="1">
    <location>
        <begin position="118"/>
        <end position="119"/>
    </location>
    <ligand>
        <name>substrate</name>
    </ligand>
</feature>
<feature type="binding site" evidence="1">
    <location>
        <begin position="185"/>
        <end position="186"/>
    </location>
    <ligand>
        <name>substrate</name>
    </ligand>
</feature>
<feature type="site" description="Transition state stabilizer" evidence="1">
    <location>
        <position position="184"/>
    </location>
</feature>
<protein>
    <recommendedName>
        <fullName evidence="1">2,3-bisphosphoglycerate-dependent phosphoglycerate mutase</fullName>
        <shortName evidence="1">BPG-dependent PGAM</shortName>
        <shortName evidence="1">PGAM</shortName>
        <shortName evidence="1">Phosphoglyceromutase</shortName>
        <shortName evidence="1">dPGM</shortName>
        <ecNumber evidence="1">5.4.2.11</ecNumber>
    </recommendedName>
</protein>
<keyword id="KW-0312">Gluconeogenesis</keyword>
<keyword id="KW-0324">Glycolysis</keyword>
<keyword id="KW-0413">Isomerase</keyword>
<keyword id="KW-1185">Reference proteome</keyword>
<proteinExistence type="inferred from homology"/>
<organism>
    <name type="scientific">Corynebacterium efficiens (strain DSM 44549 / YS-314 / AJ 12310 / JCM 11189 / NBRC 100395)</name>
    <dbReference type="NCBI Taxonomy" id="196164"/>
    <lineage>
        <taxon>Bacteria</taxon>
        <taxon>Bacillati</taxon>
        <taxon>Actinomycetota</taxon>
        <taxon>Actinomycetes</taxon>
        <taxon>Mycobacteriales</taxon>
        <taxon>Corynebacteriaceae</taxon>
        <taxon>Corynebacterium</taxon>
    </lineage>
</organism>
<name>GPMA_COREF</name>
<sequence length="250" mass="27637">MVMTNGKLILLRHGQSAWNASNQFTGWVDVDLTTIGEAEAKRGGELLVENNVLPDVVYTSLLRRAIRTANLALDAADRHWIPVVRDWRLNERHYGALQGLNKAETKDKYGDEQYMAWRRSYGTPPPELADDAEYSQAGDVRYKDLESVPRTECLKDVVERFIPYFEEEILPRVKKGENVLIAAHGNSLRALVKHLDNISDDDIAELNIPTGIPLVYEITPEGTVVNPGGTYLDPEAAAAGAAAVANQGGK</sequence>
<reference key="1">
    <citation type="journal article" date="2003" name="Genome Res.">
        <title>Comparative complete genome sequence analysis of the amino acid replacements responsible for the thermostability of Corynebacterium efficiens.</title>
        <authorList>
            <person name="Nishio Y."/>
            <person name="Nakamura Y."/>
            <person name="Kawarabayasi Y."/>
            <person name="Usuda Y."/>
            <person name="Kimura E."/>
            <person name="Sugimoto S."/>
            <person name="Matsui K."/>
            <person name="Yamagishi A."/>
            <person name="Kikuchi H."/>
            <person name="Ikeo K."/>
            <person name="Gojobori T."/>
        </authorList>
    </citation>
    <scope>NUCLEOTIDE SEQUENCE [LARGE SCALE GENOMIC DNA]</scope>
    <source>
        <strain>DSM 44549 / YS-314 / AJ 12310 / JCM 11189 / NBRC 100395</strain>
    </source>
</reference>